<reference key="1">
    <citation type="submission" date="2009-04" db="EMBL/GenBank/DDBJ databases">
        <title>Genome sequence of Bacillus anthracis A0248.</title>
        <authorList>
            <person name="Dodson R.J."/>
            <person name="Munk A.C."/>
            <person name="Bruce D."/>
            <person name="Detter C."/>
            <person name="Tapia R."/>
            <person name="Sutton G."/>
            <person name="Sims D."/>
            <person name="Brettin T."/>
        </authorList>
    </citation>
    <scope>NUCLEOTIDE SEQUENCE [LARGE SCALE GENOMIC DNA]</scope>
    <source>
        <strain>A0248</strain>
    </source>
</reference>
<comment type="function">
    <text evidence="1">Catalyzes the condensation of the acetyl group of acetyl-CoA with 3-methyl-2-oxobutanoate (2-ketoisovalerate) to form 3-carboxy-3-hydroxy-4-methylpentanoate (2-isopropylmalate).</text>
</comment>
<comment type="catalytic activity">
    <reaction evidence="1">
        <text>3-methyl-2-oxobutanoate + acetyl-CoA + H2O = (2S)-2-isopropylmalate + CoA + H(+)</text>
        <dbReference type="Rhea" id="RHEA:21524"/>
        <dbReference type="ChEBI" id="CHEBI:1178"/>
        <dbReference type="ChEBI" id="CHEBI:11851"/>
        <dbReference type="ChEBI" id="CHEBI:15377"/>
        <dbReference type="ChEBI" id="CHEBI:15378"/>
        <dbReference type="ChEBI" id="CHEBI:57287"/>
        <dbReference type="ChEBI" id="CHEBI:57288"/>
        <dbReference type="EC" id="2.3.3.13"/>
    </reaction>
</comment>
<comment type="cofactor">
    <cofactor evidence="1">
        <name>Mn(2+)</name>
        <dbReference type="ChEBI" id="CHEBI:29035"/>
    </cofactor>
</comment>
<comment type="pathway">
    <text evidence="1">Amino-acid biosynthesis; L-leucine biosynthesis; L-leucine from 3-methyl-2-oxobutanoate: step 1/4.</text>
</comment>
<comment type="subunit">
    <text evidence="1">Homodimer.</text>
</comment>
<comment type="subcellular location">
    <subcellularLocation>
        <location evidence="1">Cytoplasm</location>
    </subcellularLocation>
</comment>
<comment type="similarity">
    <text evidence="1">Belongs to the alpha-IPM synthase/homocitrate synthase family. LeuA type 1 subfamily.</text>
</comment>
<organism>
    <name type="scientific">Bacillus anthracis (strain A0248)</name>
    <dbReference type="NCBI Taxonomy" id="592021"/>
    <lineage>
        <taxon>Bacteria</taxon>
        <taxon>Bacillati</taxon>
        <taxon>Bacillota</taxon>
        <taxon>Bacilli</taxon>
        <taxon>Bacillales</taxon>
        <taxon>Bacillaceae</taxon>
        <taxon>Bacillus</taxon>
        <taxon>Bacillus cereus group</taxon>
    </lineage>
</organism>
<keyword id="KW-0028">Amino-acid biosynthesis</keyword>
<keyword id="KW-0100">Branched-chain amino acid biosynthesis</keyword>
<keyword id="KW-0963">Cytoplasm</keyword>
<keyword id="KW-0432">Leucine biosynthesis</keyword>
<keyword id="KW-0464">Manganese</keyword>
<keyword id="KW-0479">Metal-binding</keyword>
<keyword id="KW-0808">Transferase</keyword>
<gene>
    <name evidence="1" type="primary">leuA</name>
    <name type="ordered locus">BAA_1487</name>
</gene>
<evidence type="ECO:0000255" key="1">
    <source>
        <dbReference type="HAMAP-Rule" id="MF_01025"/>
    </source>
</evidence>
<name>LEU1_BACAA</name>
<feature type="chain" id="PRO_1000149126" description="2-isopropylmalate synthase">
    <location>
        <begin position="1"/>
        <end position="506"/>
    </location>
</feature>
<feature type="domain" description="Pyruvate carboxyltransferase" evidence="1">
    <location>
        <begin position="4"/>
        <end position="266"/>
    </location>
</feature>
<feature type="region of interest" description="Regulatory domain" evidence="1">
    <location>
        <begin position="390"/>
        <end position="506"/>
    </location>
</feature>
<feature type="binding site" evidence="1">
    <location>
        <position position="13"/>
    </location>
    <ligand>
        <name>Mn(2+)</name>
        <dbReference type="ChEBI" id="CHEBI:29035"/>
    </ligand>
</feature>
<feature type="binding site" evidence="1">
    <location>
        <position position="201"/>
    </location>
    <ligand>
        <name>Mn(2+)</name>
        <dbReference type="ChEBI" id="CHEBI:29035"/>
    </ligand>
</feature>
<feature type="binding site" evidence="1">
    <location>
        <position position="203"/>
    </location>
    <ligand>
        <name>Mn(2+)</name>
        <dbReference type="ChEBI" id="CHEBI:29035"/>
    </ligand>
</feature>
<feature type="binding site" evidence="1">
    <location>
        <position position="237"/>
    </location>
    <ligand>
        <name>Mn(2+)</name>
        <dbReference type="ChEBI" id="CHEBI:29035"/>
    </ligand>
</feature>
<accession>C3P4Z6</accession>
<sequence>MKQILFMDTTLRDGEQSPGVNLNEQEKLQIARQLERLGIHVMEAGFAAASEGDFQSVKRIANTIQNATVMSLARAKESDIRRAYEAVKGAVSPRLHVFLATSDIHMKYKLCMSKEDVLDSIYRSVTLGKSLFPTVQFSAEDATRTARDFLAEAVEVAIRAGANVINIPDTVGYTNPEEYYALFKYLQESVPSYEKAIFSCHCHDDLGMAVANSLAAVEGGALQVEGTINGIGERAGNAALEEVAVALHIRKDFYKAEPSMTLKEIKATSTLVSRLTGMVVSKNKAIVGANAFAHESGIHQDGVLKEVTTYEIIEPALVGESQNLFVLGKHSGRHAFTEKMKELGYEFTNDERDAVFEAFKKLADRKKEITEEDLRALMLGEAAFAAQQYNITQLQVHFVSNSTQCATVVLKDEEGNVFEDAATGSGSIEAIYNAIQRILGLECELADYRIQSITQGQDALAHVHVELKEGAHQVSGFGVAQDVLEASARAYVHAAGKLKSFIQLVK</sequence>
<dbReference type="EC" id="2.3.3.13" evidence="1"/>
<dbReference type="EMBL" id="CP001598">
    <property type="protein sequence ID" value="ACQ49653.1"/>
    <property type="molecule type" value="Genomic_DNA"/>
</dbReference>
<dbReference type="RefSeq" id="WP_000809586.1">
    <property type="nucleotide sequence ID" value="NC_012659.1"/>
</dbReference>
<dbReference type="SMR" id="C3P4Z6"/>
<dbReference type="GeneID" id="45021399"/>
<dbReference type="KEGG" id="bai:BAA_1487"/>
<dbReference type="HOGENOM" id="CLU_022158_0_1_9"/>
<dbReference type="UniPathway" id="UPA00048">
    <property type="reaction ID" value="UER00070"/>
</dbReference>
<dbReference type="GO" id="GO:0005737">
    <property type="term" value="C:cytoplasm"/>
    <property type="evidence" value="ECO:0007669"/>
    <property type="project" value="UniProtKB-SubCell"/>
</dbReference>
<dbReference type="GO" id="GO:0003852">
    <property type="term" value="F:2-isopropylmalate synthase activity"/>
    <property type="evidence" value="ECO:0007669"/>
    <property type="project" value="UniProtKB-UniRule"/>
</dbReference>
<dbReference type="GO" id="GO:0003985">
    <property type="term" value="F:acetyl-CoA C-acetyltransferase activity"/>
    <property type="evidence" value="ECO:0007669"/>
    <property type="project" value="UniProtKB-UniRule"/>
</dbReference>
<dbReference type="GO" id="GO:0030145">
    <property type="term" value="F:manganese ion binding"/>
    <property type="evidence" value="ECO:0007669"/>
    <property type="project" value="UniProtKB-UniRule"/>
</dbReference>
<dbReference type="GO" id="GO:0009098">
    <property type="term" value="P:L-leucine biosynthetic process"/>
    <property type="evidence" value="ECO:0007669"/>
    <property type="project" value="UniProtKB-UniRule"/>
</dbReference>
<dbReference type="CDD" id="cd07940">
    <property type="entry name" value="DRE_TIM_IPMS"/>
    <property type="match status" value="1"/>
</dbReference>
<dbReference type="FunFam" id="1.10.238.260:FF:000001">
    <property type="entry name" value="2-isopropylmalate synthase"/>
    <property type="match status" value="1"/>
</dbReference>
<dbReference type="FunFam" id="3.20.20.70:FF:000287">
    <property type="entry name" value="2-isopropylmalate synthase"/>
    <property type="match status" value="1"/>
</dbReference>
<dbReference type="FunFam" id="3.30.160.270:FF:000003">
    <property type="entry name" value="2-isopropylmalate synthase"/>
    <property type="match status" value="1"/>
</dbReference>
<dbReference type="Gene3D" id="1.10.238.260">
    <property type="match status" value="1"/>
</dbReference>
<dbReference type="Gene3D" id="3.30.160.270">
    <property type="match status" value="1"/>
</dbReference>
<dbReference type="Gene3D" id="3.20.20.70">
    <property type="entry name" value="Aldolase class I"/>
    <property type="match status" value="1"/>
</dbReference>
<dbReference type="HAMAP" id="MF_01025">
    <property type="entry name" value="LeuA_type1"/>
    <property type="match status" value="1"/>
</dbReference>
<dbReference type="InterPro" id="IPR050073">
    <property type="entry name" value="2-IPM_HCS-like"/>
</dbReference>
<dbReference type="InterPro" id="IPR013709">
    <property type="entry name" value="2-isopropylmalate_synth_dimer"/>
</dbReference>
<dbReference type="InterPro" id="IPR002034">
    <property type="entry name" value="AIPM/Hcit_synth_CS"/>
</dbReference>
<dbReference type="InterPro" id="IPR013785">
    <property type="entry name" value="Aldolase_TIM"/>
</dbReference>
<dbReference type="InterPro" id="IPR054691">
    <property type="entry name" value="LeuA/HCS_post-cat"/>
</dbReference>
<dbReference type="InterPro" id="IPR036230">
    <property type="entry name" value="LeuA_allosteric_dom_sf"/>
</dbReference>
<dbReference type="InterPro" id="IPR005671">
    <property type="entry name" value="LeuA_bact_synth"/>
</dbReference>
<dbReference type="InterPro" id="IPR000891">
    <property type="entry name" value="PYR_CT"/>
</dbReference>
<dbReference type="NCBIfam" id="TIGR00973">
    <property type="entry name" value="leuA_bact"/>
    <property type="match status" value="1"/>
</dbReference>
<dbReference type="NCBIfam" id="NF002086">
    <property type="entry name" value="PRK00915.1-3"/>
    <property type="match status" value="1"/>
</dbReference>
<dbReference type="NCBIfam" id="NF002088">
    <property type="entry name" value="PRK00915.1-5"/>
    <property type="match status" value="1"/>
</dbReference>
<dbReference type="PANTHER" id="PTHR10277:SF9">
    <property type="entry name" value="2-ISOPROPYLMALATE SYNTHASE 1, CHLOROPLASTIC-RELATED"/>
    <property type="match status" value="1"/>
</dbReference>
<dbReference type="PANTHER" id="PTHR10277">
    <property type="entry name" value="HOMOCITRATE SYNTHASE-RELATED"/>
    <property type="match status" value="1"/>
</dbReference>
<dbReference type="Pfam" id="PF22617">
    <property type="entry name" value="HCS_D2"/>
    <property type="match status" value="1"/>
</dbReference>
<dbReference type="Pfam" id="PF00682">
    <property type="entry name" value="HMGL-like"/>
    <property type="match status" value="1"/>
</dbReference>
<dbReference type="Pfam" id="PF08502">
    <property type="entry name" value="LeuA_dimer"/>
    <property type="match status" value="1"/>
</dbReference>
<dbReference type="SMART" id="SM00917">
    <property type="entry name" value="LeuA_dimer"/>
    <property type="match status" value="1"/>
</dbReference>
<dbReference type="SUPFAM" id="SSF110921">
    <property type="entry name" value="2-isopropylmalate synthase LeuA, allosteric (dimerisation) domain"/>
    <property type="match status" value="1"/>
</dbReference>
<dbReference type="SUPFAM" id="SSF51569">
    <property type="entry name" value="Aldolase"/>
    <property type="match status" value="1"/>
</dbReference>
<dbReference type="PROSITE" id="PS00815">
    <property type="entry name" value="AIPM_HOMOCIT_SYNTH_1"/>
    <property type="match status" value="1"/>
</dbReference>
<dbReference type="PROSITE" id="PS00816">
    <property type="entry name" value="AIPM_HOMOCIT_SYNTH_2"/>
    <property type="match status" value="1"/>
</dbReference>
<dbReference type="PROSITE" id="PS50991">
    <property type="entry name" value="PYR_CT"/>
    <property type="match status" value="1"/>
</dbReference>
<protein>
    <recommendedName>
        <fullName evidence="1">2-isopropylmalate synthase</fullName>
        <ecNumber evidence="1">2.3.3.13</ecNumber>
    </recommendedName>
    <alternativeName>
        <fullName evidence="1">Alpha-IPM synthase</fullName>
    </alternativeName>
    <alternativeName>
        <fullName evidence="1">Alpha-isopropylmalate synthase</fullName>
    </alternativeName>
</protein>
<proteinExistence type="inferred from homology"/>